<dbReference type="EC" id="2.6.1.13" evidence="1"/>
<dbReference type="EMBL" id="AP008934">
    <property type="protein sequence ID" value="BAE18963.1"/>
    <property type="molecule type" value="Genomic_DNA"/>
</dbReference>
<dbReference type="RefSeq" id="WP_002483795.1">
    <property type="nucleotide sequence ID" value="NZ_MTGA01000039.1"/>
</dbReference>
<dbReference type="SMR" id="Q49W96"/>
<dbReference type="GeneID" id="3616473"/>
<dbReference type="KEGG" id="ssp:SSP1818"/>
<dbReference type="eggNOG" id="COG4992">
    <property type="taxonomic scope" value="Bacteria"/>
</dbReference>
<dbReference type="HOGENOM" id="CLU_016922_10_1_9"/>
<dbReference type="OrthoDB" id="9807885at2"/>
<dbReference type="UniPathway" id="UPA00098">
    <property type="reaction ID" value="UER00358"/>
</dbReference>
<dbReference type="Proteomes" id="UP000006371">
    <property type="component" value="Chromosome"/>
</dbReference>
<dbReference type="GO" id="GO:0005737">
    <property type="term" value="C:cytoplasm"/>
    <property type="evidence" value="ECO:0007669"/>
    <property type="project" value="UniProtKB-SubCell"/>
</dbReference>
<dbReference type="GO" id="GO:0042802">
    <property type="term" value="F:identical protein binding"/>
    <property type="evidence" value="ECO:0007669"/>
    <property type="project" value="TreeGrafter"/>
</dbReference>
<dbReference type="GO" id="GO:0004587">
    <property type="term" value="F:ornithine aminotransferase activity"/>
    <property type="evidence" value="ECO:0007669"/>
    <property type="project" value="UniProtKB-UniRule"/>
</dbReference>
<dbReference type="GO" id="GO:0030170">
    <property type="term" value="F:pyridoxal phosphate binding"/>
    <property type="evidence" value="ECO:0007669"/>
    <property type="project" value="UniProtKB-UniRule"/>
</dbReference>
<dbReference type="GO" id="GO:0055129">
    <property type="term" value="P:L-proline biosynthetic process"/>
    <property type="evidence" value="ECO:0007669"/>
    <property type="project" value="UniProtKB-UniRule"/>
</dbReference>
<dbReference type="CDD" id="cd00610">
    <property type="entry name" value="OAT_like"/>
    <property type="match status" value="1"/>
</dbReference>
<dbReference type="FunFam" id="3.40.640.10:FF:000011">
    <property type="entry name" value="Ornithine aminotransferase"/>
    <property type="match status" value="1"/>
</dbReference>
<dbReference type="Gene3D" id="3.90.1150.10">
    <property type="entry name" value="Aspartate Aminotransferase, domain 1"/>
    <property type="match status" value="1"/>
</dbReference>
<dbReference type="Gene3D" id="3.40.640.10">
    <property type="entry name" value="Type I PLP-dependent aspartate aminotransferase-like (Major domain)"/>
    <property type="match status" value="1"/>
</dbReference>
<dbReference type="HAMAP" id="MF_01689">
    <property type="entry name" value="Ornith_aminotrans_3"/>
    <property type="match status" value="1"/>
</dbReference>
<dbReference type="InterPro" id="IPR005814">
    <property type="entry name" value="Aminotrans_3"/>
</dbReference>
<dbReference type="InterPro" id="IPR049704">
    <property type="entry name" value="Aminotrans_3_PPA_site"/>
</dbReference>
<dbReference type="InterPro" id="IPR050103">
    <property type="entry name" value="Class-III_PLP-dep_AT"/>
</dbReference>
<dbReference type="InterPro" id="IPR010164">
    <property type="entry name" value="Orn_aminotrans"/>
</dbReference>
<dbReference type="InterPro" id="IPR034757">
    <property type="entry name" value="Ornith_aminotrans_bact"/>
</dbReference>
<dbReference type="InterPro" id="IPR015424">
    <property type="entry name" value="PyrdxlP-dep_Trfase"/>
</dbReference>
<dbReference type="InterPro" id="IPR015421">
    <property type="entry name" value="PyrdxlP-dep_Trfase_major"/>
</dbReference>
<dbReference type="InterPro" id="IPR015422">
    <property type="entry name" value="PyrdxlP-dep_Trfase_small"/>
</dbReference>
<dbReference type="NCBIfam" id="TIGR01885">
    <property type="entry name" value="Orn_aminotrans"/>
    <property type="match status" value="1"/>
</dbReference>
<dbReference type="NCBIfam" id="NF002325">
    <property type="entry name" value="PRK01278.1"/>
    <property type="match status" value="1"/>
</dbReference>
<dbReference type="NCBIfam" id="NF003145">
    <property type="entry name" value="PRK04073.1"/>
    <property type="match status" value="1"/>
</dbReference>
<dbReference type="PANTHER" id="PTHR11986">
    <property type="entry name" value="AMINOTRANSFERASE CLASS III"/>
    <property type="match status" value="1"/>
</dbReference>
<dbReference type="PANTHER" id="PTHR11986:SF18">
    <property type="entry name" value="ORNITHINE AMINOTRANSFERASE, MITOCHONDRIAL"/>
    <property type="match status" value="1"/>
</dbReference>
<dbReference type="Pfam" id="PF00202">
    <property type="entry name" value="Aminotran_3"/>
    <property type="match status" value="1"/>
</dbReference>
<dbReference type="PIRSF" id="PIRSF000521">
    <property type="entry name" value="Transaminase_4ab_Lys_Orn"/>
    <property type="match status" value="1"/>
</dbReference>
<dbReference type="SUPFAM" id="SSF53383">
    <property type="entry name" value="PLP-dependent transferases"/>
    <property type="match status" value="1"/>
</dbReference>
<dbReference type="PROSITE" id="PS00600">
    <property type="entry name" value="AA_TRANSFER_CLASS_3"/>
    <property type="match status" value="1"/>
</dbReference>
<evidence type="ECO:0000255" key="1">
    <source>
        <dbReference type="HAMAP-Rule" id="MF_01689"/>
    </source>
</evidence>
<proteinExistence type="inferred from homology"/>
<protein>
    <recommendedName>
        <fullName evidence="1">Ornithine aminotransferase 2</fullName>
        <shortName evidence="1">OAT 2</shortName>
        <ecNumber evidence="1">2.6.1.13</ecNumber>
    </recommendedName>
    <alternativeName>
        <fullName evidence="1">Ornithine--oxo-acid aminotransferase 2</fullName>
    </alternativeName>
</protein>
<reference key="1">
    <citation type="journal article" date="2005" name="Proc. Natl. Acad. Sci. U.S.A.">
        <title>Whole genome sequence of Staphylococcus saprophyticus reveals the pathogenesis of uncomplicated urinary tract infection.</title>
        <authorList>
            <person name="Kuroda M."/>
            <person name="Yamashita A."/>
            <person name="Hirakawa H."/>
            <person name="Kumano M."/>
            <person name="Morikawa K."/>
            <person name="Higashide M."/>
            <person name="Maruyama A."/>
            <person name="Inose Y."/>
            <person name="Matoba K."/>
            <person name="Toh H."/>
            <person name="Kuhara S."/>
            <person name="Hattori M."/>
            <person name="Ohta T."/>
        </authorList>
    </citation>
    <scope>NUCLEOTIDE SEQUENCE [LARGE SCALE GENOMIC DNA]</scope>
    <source>
        <strain>ATCC 15305 / DSM 20229 / NCIMB 8711 / NCTC 7292 / S-41</strain>
    </source>
</reference>
<sequence length="396" mass="43399">MSRSEEIIEVTNHYGAQNYVPLPIVISEAEGVWVKDPEGNKYMDMLSAYSAVNQGHRHPKIIQALKEQADKVTLVSRAFHSENLGEWYEKICKLSGKAKALPMNTGAEAVETALKAARRWAYDVKNIQPDKAEIIAFNGNFHGRTMAPVSLSSEPEYQRGYGPLLDGFRKVDFGDIEAVKAAINENTAAILIEPIQGEAGINVPPEGYLKQIRELCDEHNVLFIADEIQAGLGRSGKLFATDWDNVKPDVYILGKALGGGVLPISVVLADEEVLGVFTPGSHGSTFGGNPLACAVSNAALDVIIDEDLPGRSLELGDYFKSELEKIDHPAIKEVRGRGLFIGIELNEAARPFCESLKEQGLLCKETHDTVIRFAPPLIISKEELDFALDKVRSVFE</sequence>
<name>OAT2_STAS1</name>
<accession>Q49W96</accession>
<comment type="function">
    <text evidence="1">Catalyzes the interconversion of ornithine to glutamate semialdehyde.</text>
</comment>
<comment type="catalytic activity">
    <reaction evidence="1">
        <text>a 2-oxocarboxylate + L-ornithine = L-glutamate 5-semialdehyde + an L-alpha-amino acid</text>
        <dbReference type="Rhea" id="RHEA:13877"/>
        <dbReference type="ChEBI" id="CHEBI:35179"/>
        <dbReference type="ChEBI" id="CHEBI:46911"/>
        <dbReference type="ChEBI" id="CHEBI:58066"/>
        <dbReference type="ChEBI" id="CHEBI:59869"/>
        <dbReference type="EC" id="2.6.1.13"/>
    </reaction>
</comment>
<comment type="cofactor">
    <cofactor evidence="1">
        <name>pyridoxal 5'-phosphate</name>
        <dbReference type="ChEBI" id="CHEBI:597326"/>
    </cofactor>
</comment>
<comment type="pathway">
    <text evidence="1">Amino-acid biosynthesis; L-proline biosynthesis; L-glutamate 5-semialdehyde from L-ornithine: step 1/1.</text>
</comment>
<comment type="subcellular location">
    <subcellularLocation>
        <location evidence="1">Cytoplasm</location>
    </subcellularLocation>
</comment>
<comment type="similarity">
    <text evidence="1">Belongs to the class-III pyridoxal-phosphate-dependent aminotransferase family. OAT subfamily.</text>
</comment>
<gene>
    <name evidence="1" type="primary">rocD2</name>
    <name type="ordered locus">SSP1818</name>
</gene>
<keyword id="KW-0028">Amino-acid biosynthesis</keyword>
<keyword id="KW-0032">Aminotransferase</keyword>
<keyword id="KW-0963">Cytoplasm</keyword>
<keyword id="KW-0641">Proline biosynthesis</keyword>
<keyword id="KW-0663">Pyridoxal phosphate</keyword>
<keyword id="KW-1185">Reference proteome</keyword>
<keyword id="KW-0808">Transferase</keyword>
<organism>
    <name type="scientific">Staphylococcus saprophyticus subsp. saprophyticus (strain ATCC 15305 / DSM 20229 / NCIMB 8711 / NCTC 7292 / S-41)</name>
    <dbReference type="NCBI Taxonomy" id="342451"/>
    <lineage>
        <taxon>Bacteria</taxon>
        <taxon>Bacillati</taxon>
        <taxon>Bacillota</taxon>
        <taxon>Bacilli</taxon>
        <taxon>Bacillales</taxon>
        <taxon>Staphylococcaceae</taxon>
        <taxon>Staphylococcus</taxon>
    </lineage>
</organism>
<feature type="chain" id="PRO_0000112797" description="Ornithine aminotransferase 2">
    <location>
        <begin position="1"/>
        <end position="396"/>
    </location>
</feature>
<feature type="modified residue" description="N6-(pyridoxal phosphate)lysine" evidence="1">
    <location>
        <position position="255"/>
    </location>
</feature>